<sequence length="266" mass="28793">MDYINAALLGVIEGITEFLPISSTGHLIIAEQWLGHRSDMFNIVIQAGAILAVTIIYWRRLLDLVLGWREPANRDYAAKLIVAFLITAVLGLVVKKVLHFELPETATPIAWALIIGGFWMIFAEWAAARKAPHKEITWLVAILVGIAQIVAGIFPGTSRSGATIFVAMLAGTGNRAAATEFAFLVGIPTMYAASGYELLKTFKDGGAANEDWTALGIAFVVSTIVAFIAVKWLLAYIRSNRFTLFAVYRIILGVLLLGMAATGLIG</sequence>
<comment type="function">
    <text evidence="1">Catalyzes the dephosphorylation of undecaprenyl diphosphate (UPP). Confers resistance to bacitracin.</text>
</comment>
<comment type="catalytic activity">
    <reaction evidence="1">
        <text>di-trans,octa-cis-undecaprenyl diphosphate + H2O = di-trans,octa-cis-undecaprenyl phosphate + phosphate + H(+)</text>
        <dbReference type="Rhea" id="RHEA:28094"/>
        <dbReference type="ChEBI" id="CHEBI:15377"/>
        <dbReference type="ChEBI" id="CHEBI:15378"/>
        <dbReference type="ChEBI" id="CHEBI:43474"/>
        <dbReference type="ChEBI" id="CHEBI:58405"/>
        <dbReference type="ChEBI" id="CHEBI:60392"/>
        <dbReference type="EC" id="3.6.1.27"/>
    </reaction>
</comment>
<comment type="subcellular location">
    <subcellularLocation>
        <location evidence="1">Cell inner membrane</location>
        <topology evidence="1">Multi-pass membrane protein</topology>
    </subcellularLocation>
</comment>
<comment type="miscellaneous">
    <text>Bacitracin is thought to be involved in the inhibition of peptidoglycan synthesis by sequestering undecaprenyl diphosphate, thereby reducing the pool of lipid carrier available.</text>
</comment>
<comment type="similarity">
    <text evidence="1">Belongs to the UppP family.</text>
</comment>
<name>UPPP_RHILW</name>
<organism>
    <name type="scientific">Rhizobium leguminosarum bv. trifolii (strain WSM2304)</name>
    <dbReference type="NCBI Taxonomy" id="395492"/>
    <lineage>
        <taxon>Bacteria</taxon>
        <taxon>Pseudomonadati</taxon>
        <taxon>Pseudomonadota</taxon>
        <taxon>Alphaproteobacteria</taxon>
        <taxon>Hyphomicrobiales</taxon>
        <taxon>Rhizobiaceae</taxon>
        <taxon>Rhizobium/Agrobacterium group</taxon>
        <taxon>Rhizobium</taxon>
    </lineage>
</organism>
<feature type="chain" id="PRO_1000197396" description="Undecaprenyl-diphosphatase">
    <location>
        <begin position="1"/>
        <end position="266"/>
    </location>
</feature>
<feature type="transmembrane region" description="Helical" evidence="1">
    <location>
        <begin position="38"/>
        <end position="58"/>
    </location>
</feature>
<feature type="transmembrane region" description="Helical" evidence="1">
    <location>
        <begin position="80"/>
        <end position="100"/>
    </location>
</feature>
<feature type="transmembrane region" description="Helical" evidence="1">
    <location>
        <begin position="108"/>
        <end position="128"/>
    </location>
</feature>
<feature type="transmembrane region" description="Helical" evidence="1">
    <location>
        <begin position="136"/>
        <end position="156"/>
    </location>
</feature>
<feature type="transmembrane region" description="Helical" evidence="1">
    <location>
        <begin position="176"/>
        <end position="196"/>
    </location>
</feature>
<feature type="transmembrane region" description="Helical" evidence="1">
    <location>
        <begin position="217"/>
        <end position="237"/>
    </location>
</feature>
<feature type="transmembrane region" description="Helical" evidence="1">
    <location>
        <begin position="245"/>
        <end position="265"/>
    </location>
</feature>
<proteinExistence type="inferred from homology"/>
<gene>
    <name evidence="1" type="primary">uppP</name>
    <name type="ordered locus">Rleg2_4321</name>
</gene>
<reference key="1">
    <citation type="journal article" date="2010" name="Stand. Genomic Sci.">
        <title>Complete genome sequence of Rhizobium leguminosarum bv trifolii strain WSM2304, an effective microsymbiont of the South American clover Trifolium polymorphum.</title>
        <authorList>
            <person name="Reeve W."/>
            <person name="O'Hara G."/>
            <person name="Chain P."/>
            <person name="Ardley J."/>
            <person name="Brau L."/>
            <person name="Nandesena K."/>
            <person name="Tiwari R."/>
            <person name="Malfatti S."/>
            <person name="Kiss H."/>
            <person name="Lapidus A."/>
            <person name="Copeland A."/>
            <person name="Nolan M."/>
            <person name="Land M."/>
            <person name="Ivanova N."/>
            <person name="Mavromatis K."/>
            <person name="Markowitz V."/>
            <person name="Kyrpides N."/>
            <person name="Melino V."/>
            <person name="Denton M."/>
            <person name="Yates R."/>
            <person name="Howieson J."/>
        </authorList>
    </citation>
    <scope>NUCLEOTIDE SEQUENCE [LARGE SCALE GENOMIC DNA]</scope>
    <source>
        <strain>WSM2304</strain>
    </source>
</reference>
<dbReference type="EC" id="3.6.1.27" evidence="1"/>
<dbReference type="EMBL" id="CP001191">
    <property type="protein sequence ID" value="ACI57579.1"/>
    <property type="molecule type" value="Genomic_DNA"/>
</dbReference>
<dbReference type="RefSeq" id="WP_012559685.1">
    <property type="nucleotide sequence ID" value="NC_011369.1"/>
</dbReference>
<dbReference type="SMR" id="B5ZYG2"/>
<dbReference type="STRING" id="395492.Rleg2_4321"/>
<dbReference type="KEGG" id="rlt:Rleg2_4321"/>
<dbReference type="eggNOG" id="COG1968">
    <property type="taxonomic scope" value="Bacteria"/>
</dbReference>
<dbReference type="HOGENOM" id="CLU_060296_2_0_5"/>
<dbReference type="Proteomes" id="UP000008330">
    <property type="component" value="Chromosome"/>
</dbReference>
<dbReference type="GO" id="GO:0005886">
    <property type="term" value="C:plasma membrane"/>
    <property type="evidence" value="ECO:0007669"/>
    <property type="project" value="UniProtKB-SubCell"/>
</dbReference>
<dbReference type="GO" id="GO:0050380">
    <property type="term" value="F:undecaprenyl-diphosphatase activity"/>
    <property type="evidence" value="ECO:0007669"/>
    <property type="project" value="UniProtKB-UniRule"/>
</dbReference>
<dbReference type="GO" id="GO:0071555">
    <property type="term" value="P:cell wall organization"/>
    <property type="evidence" value="ECO:0007669"/>
    <property type="project" value="UniProtKB-KW"/>
</dbReference>
<dbReference type="GO" id="GO:0009252">
    <property type="term" value="P:peptidoglycan biosynthetic process"/>
    <property type="evidence" value="ECO:0007669"/>
    <property type="project" value="UniProtKB-KW"/>
</dbReference>
<dbReference type="GO" id="GO:0008360">
    <property type="term" value="P:regulation of cell shape"/>
    <property type="evidence" value="ECO:0007669"/>
    <property type="project" value="UniProtKB-KW"/>
</dbReference>
<dbReference type="GO" id="GO:0046677">
    <property type="term" value="P:response to antibiotic"/>
    <property type="evidence" value="ECO:0007669"/>
    <property type="project" value="UniProtKB-UniRule"/>
</dbReference>
<dbReference type="HAMAP" id="MF_01006">
    <property type="entry name" value="Undec_diphosphatase"/>
    <property type="match status" value="1"/>
</dbReference>
<dbReference type="InterPro" id="IPR003824">
    <property type="entry name" value="UppP"/>
</dbReference>
<dbReference type="NCBIfam" id="NF001390">
    <property type="entry name" value="PRK00281.1-4"/>
    <property type="match status" value="1"/>
</dbReference>
<dbReference type="PANTHER" id="PTHR30622">
    <property type="entry name" value="UNDECAPRENYL-DIPHOSPHATASE"/>
    <property type="match status" value="1"/>
</dbReference>
<dbReference type="PANTHER" id="PTHR30622:SF3">
    <property type="entry name" value="UNDECAPRENYL-DIPHOSPHATASE"/>
    <property type="match status" value="1"/>
</dbReference>
<dbReference type="Pfam" id="PF02673">
    <property type="entry name" value="BacA"/>
    <property type="match status" value="1"/>
</dbReference>
<protein>
    <recommendedName>
        <fullName evidence="1">Undecaprenyl-diphosphatase</fullName>
        <ecNumber evidence="1">3.6.1.27</ecNumber>
    </recommendedName>
    <alternativeName>
        <fullName evidence="1">Bacitracin resistance protein</fullName>
    </alternativeName>
    <alternativeName>
        <fullName evidence="1">Undecaprenyl pyrophosphate phosphatase</fullName>
    </alternativeName>
</protein>
<keyword id="KW-0046">Antibiotic resistance</keyword>
<keyword id="KW-0997">Cell inner membrane</keyword>
<keyword id="KW-1003">Cell membrane</keyword>
<keyword id="KW-0133">Cell shape</keyword>
<keyword id="KW-0961">Cell wall biogenesis/degradation</keyword>
<keyword id="KW-0378">Hydrolase</keyword>
<keyword id="KW-0472">Membrane</keyword>
<keyword id="KW-0573">Peptidoglycan synthesis</keyword>
<keyword id="KW-1185">Reference proteome</keyword>
<keyword id="KW-0812">Transmembrane</keyword>
<keyword id="KW-1133">Transmembrane helix</keyword>
<accession>B5ZYG2</accession>
<evidence type="ECO:0000255" key="1">
    <source>
        <dbReference type="HAMAP-Rule" id="MF_01006"/>
    </source>
</evidence>